<evidence type="ECO:0000255" key="1">
    <source>
        <dbReference type="HAMAP-Rule" id="MF_00335"/>
    </source>
</evidence>
<evidence type="ECO:0000255" key="2">
    <source>
        <dbReference type="PROSITE-ProRule" id="PRU01175"/>
    </source>
</evidence>
<sequence>MQQNTVTLILVGVIIFLFISLFFYVIYSFVQKKKNRNFKQIKIQPKKNNKITPTSDQKLKADEFISIINKKREILNHQRADYLKIKETQESYQQLQEVISEYQKKLNLEKIKLIDQMEKEIKDNLNEKAVYYMINAMEQHAEDIISSKFSFTIKLENEGMKGKIIGKDGRNKRHFEQTTKTDLIIEPNMPAITISSPNPIRREKAKRTMEKLLETKNMDIAKISLFYKEVEEGFEQTCYEIGKDALENKLHIFDIDKKMYPIVGQLNFRTSYSQNVLLHCVEAAVLAANIAQKLNIDPIKAKKAAFFHDIGKAVDFEIDNDHVNSGVELAKKFNFEDYIINAIESHHNKVSPKTVYAALVKVVDKLSASRPGARFVSNDEYFKRIEELEKICKSFEGVSDAYVIKSGREIEVIIDPSLVSDDECKILIKDIKFKLEDSDLVNKQPIQITLIRKFTQSITTLGSASRLRT</sequence>
<organism>
    <name type="scientific">Malacoplasma penetrans (strain HF-2)</name>
    <name type="common">Mycoplasma penetrans</name>
    <dbReference type="NCBI Taxonomy" id="272633"/>
    <lineage>
        <taxon>Bacteria</taxon>
        <taxon>Bacillati</taxon>
        <taxon>Mycoplasmatota</taxon>
        <taxon>Mycoplasmoidales</taxon>
        <taxon>Mycoplasmoidaceae</taxon>
        <taxon>Malacoplasma</taxon>
    </lineage>
</organism>
<feature type="chain" id="PRO_0000163783" description="Ribonuclease Y">
    <location>
        <begin position="1"/>
        <end position="469"/>
    </location>
</feature>
<feature type="transmembrane region" description="Helical" evidence="1">
    <location>
        <begin position="6"/>
        <end position="26"/>
    </location>
</feature>
<feature type="domain" description="KH" evidence="1">
    <location>
        <begin position="149"/>
        <end position="209"/>
    </location>
</feature>
<feature type="domain" description="HD" evidence="2">
    <location>
        <begin position="276"/>
        <end position="369"/>
    </location>
</feature>
<comment type="function">
    <text evidence="1">Endoribonuclease that initiates mRNA decay.</text>
</comment>
<comment type="subcellular location">
    <subcellularLocation>
        <location evidence="1">Cell membrane</location>
        <topology evidence="1">Single-pass membrane protein</topology>
    </subcellularLocation>
</comment>
<comment type="similarity">
    <text evidence="1">Belongs to the RNase Y family.</text>
</comment>
<name>RNY_MALP2</name>
<accession>Q8EVM0</accession>
<dbReference type="EC" id="3.1.-.-" evidence="1"/>
<dbReference type="EMBL" id="BA000026">
    <property type="protein sequence ID" value="BAC44333.1"/>
    <property type="molecule type" value="Genomic_DNA"/>
</dbReference>
<dbReference type="RefSeq" id="WP_011077366.1">
    <property type="nucleotide sequence ID" value="NC_004432.1"/>
</dbReference>
<dbReference type="SMR" id="Q8EVM0"/>
<dbReference type="FunCoup" id="Q8EVM0">
    <property type="interactions" value="52"/>
</dbReference>
<dbReference type="STRING" id="272633.gene:10731660"/>
<dbReference type="KEGG" id="mpe:MYPE5440"/>
<dbReference type="eggNOG" id="COG1418">
    <property type="taxonomic scope" value="Bacteria"/>
</dbReference>
<dbReference type="HOGENOM" id="CLU_028328_0_0_14"/>
<dbReference type="InParanoid" id="Q8EVM0"/>
<dbReference type="Proteomes" id="UP000002522">
    <property type="component" value="Chromosome"/>
</dbReference>
<dbReference type="GO" id="GO:0005886">
    <property type="term" value="C:plasma membrane"/>
    <property type="evidence" value="ECO:0007669"/>
    <property type="project" value="UniProtKB-SubCell"/>
</dbReference>
<dbReference type="GO" id="GO:0003723">
    <property type="term" value="F:RNA binding"/>
    <property type="evidence" value="ECO:0007669"/>
    <property type="project" value="UniProtKB-UniRule"/>
</dbReference>
<dbReference type="GO" id="GO:0004521">
    <property type="term" value="F:RNA endonuclease activity"/>
    <property type="evidence" value="ECO:0007669"/>
    <property type="project" value="UniProtKB-UniRule"/>
</dbReference>
<dbReference type="GO" id="GO:0006402">
    <property type="term" value="P:mRNA catabolic process"/>
    <property type="evidence" value="ECO:0007669"/>
    <property type="project" value="UniProtKB-UniRule"/>
</dbReference>
<dbReference type="CDD" id="cd00077">
    <property type="entry name" value="HDc"/>
    <property type="match status" value="1"/>
</dbReference>
<dbReference type="CDD" id="cd22431">
    <property type="entry name" value="KH-I_RNaseY"/>
    <property type="match status" value="1"/>
</dbReference>
<dbReference type="Gene3D" id="1.10.3210.10">
    <property type="entry name" value="Hypothetical protein af1432"/>
    <property type="match status" value="1"/>
</dbReference>
<dbReference type="HAMAP" id="MF_00335">
    <property type="entry name" value="RNase_Y"/>
    <property type="match status" value="1"/>
</dbReference>
<dbReference type="InterPro" id="IPR003607">
    <property type="entry name" value="HD/PDEase_dom"/>
</dbReference>
<dbReference type="InterPro" id="IPR006674">
    <property type="entry name" value="HD_domain"/>
</dbReference>
<dbReference type="InterPro" id="IPR006675">
    <property type="entry name" value="HDIG_dom"/>
</dbReference>
<dbReference type="InterPro" id="IPR004087">
    <property type="entry name" value="KH_dom"/>
</dbReference>
<dbReference type="InterPro" id="IPR004088">
    <property type="entry name" value="KH_dom_type_1"/>
</dbReference>
<dbReference type="InterPro" id="IPR036612">
    <property type="entry name" value="KH_dom_type_1_sf"/>
</dbReference>
<dbReference type="InterPro" id="IPR017705">
    <property type="entry name" value="Ribonuclease_Y"/>
</dbReference>
<dbReference type="NCBIfam" id="TIGR00277">
    <property type="entry name" value="HDIG"/>
    <property type="match status" value="1"/>
</dbReference>
<dbReference type="NCBIfam" id="NF009347">
    <property type="entry name" value="PRK12705.1-4"/>
    <property type="match status" value="1"/>
</dbReference>
<dbReference type="Pfam" id="PF01966">
    <property type="entry name" value="HD"/>
    <property type="match status" value="1"/>
</dbReference>
<dbReference type="Pfam" id="PF00013">
    <property type="entry name" value="KH_1"/>
    <property type="match status" value="1"/>
</dbReference>
<dbReference type="SMART" id="SM00471">
    <property type="entry name" value="HDc"/>
    <property type="match status" value="1"/>
</dbReference>
<dbReference type="SMART" id="SM00322">
    <property type="entry name" value="KH"/>
    <property type="match status" value="1"/>
</dbReference>
<dbReference type="SUPFAM" id="SSF54791">
    <property type="entry name" value="Eukaryotic type KH-domain (KH-domain type I)"/>
    <property type="match status" value="1"/>
</dbReference>
<dbReference type="SUPFAM" id="SSF109604">
    <property type="entry name" value="HD-domain/PDEase-like"/>
    <property type="match status" value="1"/>
</dbReference>
<dbReference type="PROSITE" id="PS51831">
    <property type="entry name" value="HD"/>
    <property type="match status" value="1"/>
</dbReference>
<proteinExistence type="inferred from homology"/>
<keyword id="KW-1003">Cell membrane</keyword>
<keyword id="KW-0255">Endonuclease</keyword>
<keyword id="KW-0378">Hydrolase</keyword>
<keyword id="KW-0472">Membrane</keyword>
<keyword id="KW-0540">Nuclease</keyword>
<keyword id="KW-1185">Reference proteome</keyword>
<keyword id="KW-0694">RNA-binding</keyword>
<keyword id="KW-0812">Transmembrane</keyword>
<keyword id="KW-1133">Transmembrane helix</keyword>
<reference key="1">
    <citation type="journal article" date="2002" name="Nucleic Acids Res.">
        <title>The complete genomic sequence of Mycoplasma penetrans, an intracellular bacterial pathogen in humans.</title>
        <authorList>
            <person name="Sasaki Y."/>
            <person name="Ishikawa J."/>
            <person name="Yamashita A."/>
            <person name="Oshima K."/>
            <person name="Kenri T."/>
            <person name="Furuya K."/>
            <person name="Yoshino C."/>
            <person name="Horino A."/>
            <person name="Shiba T."/>
            <person name="Sasaki T."/>
            <person name="Hattori M."/>
        </authorList>
    </citation>
    <scope>NUCLEOTIDE SEQUENCE [LARGE SCALE GENOMIC DNA]</scope>
    <source>
        <strain>HF-2</strain>
    </source>
</reference>
<gene>
    <name evidence="1" type="primary">rny</name>
    <name type="ordered locus">MYPE5440</name>
</gene>
<protein>
    <recommendedName>
        <fullName evidence="1">Ribonuclease Y</fullName>
        <shortName evidence="1">RNase Y</shortName>
        <ecNumber evidence="1">3.1.-.-</ecNumber>
    </recommendedName>
</protein>